<feature type="initiator methionine" description="Removed" evidence="1">
    <location>
        <position position="1"/>
    </location>
</feature>
<feature type="chain" id="PRO_0000389361" description="Small ribosomal subunit protein eS1">
    <location>
        <begin position="2"/>
        <end position="256"/>
    </location>
</feature>
<feature type="region of interest" description="Disordered" evidence="2">
    <location>
        <begin position="1"/>
        <end position="20"/>
    </location>
</feature>
<feature type="compositionally biased region" description="Basic residues" evidence="2">
    <location>
        <begin position="1"/>
        <end position="18"/>
    </location>
</feature>
<feature type="modified residue" description="N-acetylalanine; partial" evidence="1">
    <location>
        <position position="2"/>
    </location>
</feature>
<comment type="subunit">
    <text evidence="1">Component of the small ribosomal subunit. Mature ribosomes consist of a small (40S) and a large (60S) subunit. The 40S subunit contains about 33 different proteins and 1 molecule of RNA (18S). The 60S subunit contains about 49 different proteins and 3 molecules of RNA (25S, 5.8S and 5S).</text>
</comment>
<comment type="subcellular location">
    <subcellularLocation>
        <location evidence="1">Cytoplasm</location>
    </subcellularLocation>
</comment>
<comment type="similarity">
    <text evidence="1">Belongs to the eukaryotic ribosomal protein eS1 family.</text>
</comment>
<protein>
    <recommendedName>
        <fullName evidence="1">Small ribosomal subunit protein eS1</fullName>
    </recommendedName>
    <alternativeName>
        <fullName evidence="3">40S ribosomal protein S1</fullName>
    </alternativeName>
</protein>
<dbReference type="EMBL" id="BA000049">
    <property type="protein sequence ID" value="BAE55127.1"/>
    <property type="molecule type" value="Genomic_DNA"/>
</dbReference>
<dbReference type="RefSeq" id="XP_001817129.1">
    <property type="nucleotide sequence ID" value="XM_001817077.2"/>
</dbReference>
<dbReference type="SMR" id="Q2UTI8"/>
<dbReference type="STRING" id="510516.Q2UTI8"/>
<dbReference type="EnsemblFungi" id="BAE55127">
    <property type="protein sequence ID" value="BAE55127"/>
    <property type="gene ID" value="AO090009000715"/>
</dbReference>
<dbReference type="GeneID" id="5989059"/>
<dbReference type="KEGG" id="aor:AO090009000715"/>
<dbReference type="VEuPathDB" id="FungiDB:AO090009000715"/>
<dbReference type="HOGENOM" id="CLU_062507_0_0_1"/>
<dbReference type="OMA" id="TRFKGHE"/>
<dbReference type="OrthoDB" id="57496at5052"/>
<dbReference type="Proteomes" id="UP000006564">
    <property type="component" value="Chromosome 1"/>
</dbReference>
<dbReference type="GO" id="GO:0022627">
    <property type="term" value="C:cytosolic small ribosomal subunit"/>
    <property type="evidence" value="ECO:0007669"/>
    <property type="project" value="UniProtKB-UniRule"/>
</dbReference>
<dbReference type="GO" id="GO:0003735">
    <property type="term" value="F:structural constituent of ribosome"/>
    <property type="evidence" value="ECO:0007669"/>
    <property type="project" value="UniProtKB-UniRule"/>
</dbReference>
<dbReference type="GO" id="GO:0006412">
    <property type="term" value="P:translation"/>
    <property type="evidence" value="ECO:0007669"/>
    <property type="project" value="UniProtKB-UniRule"/>
</dbReference>
<dbReference type="HAMAP" id="MF_03122">
    <property type="entry name" value="Ribosomal_eS1_euk"/>
    <property type="match status" value="1"/>
</dbReference>
<dbReference type="InterPro" id="IPR001593">
    <property type="entry name" value="Ribosomal_eS1"/>
</dbReference>
<dbReference type="InterPro" id="IPR018281">
    <property type="entry name" value="Ribosomal_eS1_CS"/>
</dbReference>
<dbReference type="InterPro" id="IPR027500">
    <property type="entry name" value="Ribosomal_eS1_euk"/>
</dbReference>
<dbReference type="PANTHER" id="PTHR11830">
    <property type="entry name" value="40S RIBOSOMAL PROTEIN S3A"/>
    <property type="match status" value="1"/>
</dbReference>
<dbReference type="Pfam" id="PF01015">
    <property type="entry name" value="Ribosomal_S3Ae"/>
    <property type="match status" value="1"/>
</dbReference>
<dbReference type="SMART" id="SM01397">
    <property type="entry name" value="Ribosomal_S3Ae"/>
    <property type="match status" value="1"/>
</dbReference>
<dbReference type="PROSITE" id="PS01191">
    <property type="entry name" value="RIBOSOMAL_S3AE"/>
    <property type="match status" value="1"/>
</dbReference>
<organism>
    <name type="scientific">Aspergillus oryzae (strain ATCC 42149 / RIB 40)</name>
    <name type="common">Yellow koji mold</name>
    <dbReference type="NCBI Taxonomy" id="510516"/>
    <lineage>
        <taxon>Eukaryota</taxon>
        <taxon>Fungi</taxon>
        <taxon>Dikarya</taxon>
        <taxon>Ascomycota</taxon>
        <taxon>Pezizomycotina</taxon>
        <taxon>Eurotiomycetes</taxon>
        <taxon>Eurotiomycetidae</taxon>
        <taxon>Eurotiales</taxon>
        <taxon>Aspergillaceae</taxon>
        <taxon>Aspergillus</taxon>
        <taxon>Aspergillus subgen. Circumdati</taxon>
    </lineage>
</organism>
<reference key="1">
    <citation type="journal article" date="2005" name="Nature">
        <title>Genome sequencing and analysis of Aspergillus oryzae.</title>
        <authorList>
            <person name="Machida M."/>
            <person name="Asai K."/>
            <person name="Sano M."/>
            <person name="Tanaka T."/>
            <person name="Kumagai T."/>
            <person name="Terai G."/>
            <person name="Kusumoto K."/>
            <person name="Arima T."/>
            <person name="Akita O."/>
            <person name="Kashiwagi Y."/>
            <person name="Abe K."/>
            <person name="Gomi K."/>
            <person name="Horiuchi H."/>
            <person name="Kitamoto K."/>
            <person name="Kobayashi T."/>
            <person name="Takeuchi M."/>
            <person name="Denning D.W."/>
            <person name="Galagan J.E."/>
            <person name="Nierman W.C."/>
            <person name="Yu J."/>
            <person name="Archer D.B."/>
            <person name="Bennett J.W."/>
            <person name="Bhatnagar D."/>
            <person name="Cleveland T.E."/>
            <person name="Fedorova N.D."/>
            <person name="Gotoh O."/>
            <person name="Horikawa H."/>
            <person name="Hosoyama A."/>
            <person name="Ichinomiya M."/>
            <person name="Igarashi R."/>
            <person name="Iwashita K."/>
            <person name="Juvvadi P.R."/>
            <person name="Kato M."/>
            <person name="Kato Y."/>
            <person name="Kin T."/>
            <person name="Kokubun A."/>
            <person name="Maeda H."/>
            <person name="Maeyama N."/>
            <person name="Maruyama J."/>
            <person name="Nagasaki H."/>
            <person name="Nakajima T."/>
            <person name="Oda K."/>
            <person name="Okada K."/>
            <person name="Paulsen I."/>
            <person name="Sakamoto K."/>
            <person name="Sawano T."/>
            <person name="Takahashi M."/>
            <person name="Takase K."/>
            <person name="Terabayashi Y."/>
            <person name="Wortman J.R."/>
            <person name="Yamada O."/>
            <person name="Yamagata Y."/>
            <person name="Anazawa H."/>
            <person name="Hata Y."/>
            <person name="Koide Y."/>
            <person name="Komori T."/>
            <person name="Koyama Y."/>
            <person name="Minetoki T."/>
            <person name="Suharnan S."/>
            <person name="Tanaka A."/>
            <person name="Isono K."/>
            <person name="Kuhara S."/>
            <person name="Ogasawara N."/>
            <person name="Kikuchi H."/>
        </authorList>
    </citation>
    <scope>NUCLEOTIDE SEQUENCE [LARGE SCALE GENOMIC DNA]</scope>
    <source>
        <strain>ATCC 42149 / RIB 40</strain>
    </source>
</reference>
<sequence>MAVGKNKRLSKGKKGIKKRTVDPFSRKDEYSVKAPSTFQIRDVGKTLVNRTSGLKNANDSLKGRIFEVSLADLQNDEDHAFRKVKLRVDEIQGKNCLTNFHGLDFTTDKLRSLVRKWQSLIEANVTVKTTDDYLLRLFAIAFTKRRPNQIKKTTYARSSQIRAIRKKMTEIMQREAASCTLSQLTTKLIPEVIGREIEKATQGIYPLQNVHIRKVKLLKAPKFDLGALLNLHGESTTDDKGHKVEREFKEQVLESV</sequence>
<accession>Q2UTI8</accession>
<proteinExistence type="inferred from homology"/>
<evidence type="ECO:0000255" key="1">
    <source>
        <dbReference type="HAMAP-Rule" id="MF_03122"/>
    </source>
</evidence>
<evidence type="ECO:0000256" key="2">
    <source>
        <dbReference type="SAM" id="MobiDB-lite"/>
    </source>
</evidence>
<evidence type="ECO:0000305" key="3"/>
<name>RS3A_ASPOR</name>
<keyword id="KW-0007">Acetylation</keyword>
<keyword id="KW-0963">Cytoplasm</keyword>
<keyword id="KW-1185">Reference proteome</keyword>
<keyword id="KW-0687">Ribonucleoprotein</keyword>
<keyword id="KW-0689">Ribosomal protein</keyword>
<gene>
    <name type="primary">rps1</name>
    <name type="ORF">AO090009000715</name>
</gene>